<gene>
    <name evidence="1" type="primary">htpG</name>
    <name type="ordered locus">CJE0625</name>
</gene>
<evidence type="ECO:0000255" key="1">
    <source>
        <dbReference type="HAMAP-Rule" id="MF_00505"/>
    </source>
</evidence>
<organism>
    <name type="scientific">Campylobacter jejuni (strain RM1221)</name>
    <dbReference type="NCBI Taxonomy" id="195099"/>
    <lineage>
        <taxon>Bacteria</taxon>
        <taxon>Pseudomonadati</taxon>
        <taxon>Campylobacterota</taxon>
        <taxon>Epsilonproteobacteria</taxon>
        <taxon>Campylobacterales</taxon>
        <taxon>Campylobacteraceae</taxon>
        <taxon>Campylobacter</taxon>
    </lineage>
</organism>
<accession>Q5HVP5</accession>
<sequence>MQFQTEVNQLLQLMIHSLYSNKEIFLRELISNASDALDKLNFLSVSDDKYKSLKFEPKIEIKIDKDKKTLSISDNGIGMDKDDLINNLGTIAKSGTKSFLENLSGDAKKDSQLIGQFGVGFYSAFMVASKIEVLSKKALDDKAYLWSSDANGYEINDASKEEQGTSITLYLKDDEFANTYKIESIIEKYSNHIQFPIFMEKEEFTPAKEGEEEGKTELKISQINKANALWRMQKSSLKAEDYERFYEQNFHDSNKPLLYLHTKSEGKLEYNSLFFIPQNAPFDLFRVDYQSGLKLYVKRVFISDDDKELLPTYLRFVRGIIDVEDLPLNVSREILQENQILKGVKEASVKKILGELEKLKNNDKEKYLSFFKTFGKVLKEGLYGFGGEKDSLLKLMLYKSTKGENLRSLEEYKNDLQGEQKEIFYIAGNNESLLRTSPLLEEYKQKNIEVLLMDDEIDSLVTPMLEFEGLKFIAINQVEDKNELSDEEKNTFAPLVAKFKELLKDQVEDVRLTSRLKDSPSCIVYDKNKPDFAMQQLLKQMGQEQNFKPILEINPKHAIFTGLKNNESFSADIATLVLNMAKLSEGMGVDNPAEFNASLTKIINKAFS</sequence>
<keyword id="KW-0067">ATP-binding</keyword>
<keyword id="KW-0143">Chaperone</keyword>
<keyword id="KW-0963">Cytoplasm</keyword>
<keyword id="KW-0547">Nucleotide-binding</keyword>
<keyword id="KW-0346">Stress response</keyword>
<reference key="1">
    <citation type="journal article" date="2005" name="PLoS Biol.">
        <title>Major structural differences and novel potential virulence mechanisms from the genomes of multiple Campylobacter species.</title>
        <authorList>
            <person name="Fouts D.E."/>
            <person name="Mongodin E.F."/>
            <person name="Mandrell R.E."/>
            <person name="Miller W.G."/>
            <person name="Rasko D.A."/>
            <person name="Ravel J."/>
            <person name="Brinkac L.M."/>
            <person name="DeBoy R.T."/>
            <person name="Parker C.T."/>
            <person name="Daugherty S.C."/>
            <person name="Dodson R.J."/>
            <person name="Durkin A.S."/>
            <person name="Madupu R."/>
            <person name="Sullivan S.A."/>
            <person name="Shetty J.U."/>
            <person name="Ayodeji M.A."/>
            <person name="Shvartsbeyn A."/>
            <person name="Schatz M.C."/>
            <person name="Badger J.H."/>
            <person name="Fraser C.M."/>
            <person name="Nelson K.E."/>
        </authorList>
    </citation>
    <scope>NUCLEOTIDE SEQUENCE [LARGE SCALE GENOMIC DNA]</scope>
    <source>
        <strain>RM1221</strain>
    </source>
</reference>
<comment type="function">
    <text evidence="1">Molecular chaperone. Has ATPase activity.</text>
</comment>
<comment type="subunit">
    <text evidence="1">Homodimer.</text>
</comment>
<comment type="subcellular location">
    <subcellularLocation>
        <location evidence="1">Cytoplasm</location>
    </subcellularLocation>
</comment>
<comment type="similarity">
    <text evidence="1">Belongs to the heat shock protein 90 family.</text>
</comment>
<name>HTPG_CAMJR</name>
<protein>
    <recommendedName>
        <fullName evidence="1">Chaperone protein HtpG</fullName>
    </recommendedName>
    <alternativeName>
        <fullName evidence="1">Heat shock protein HtpG</fullName>
    </alternativeName>
    <alternativeName>
        <fullName evidence="1">High temperature protein G</fullName>
    </alternativeName>
</protein>
<dbReference type="EMBL" id="CP000025">
    <property type="protein sequence ID" value="AAW35862.1"/>
    <property type="molecule type" value="Genomic_DNA"/>
</dbReference>
<dbReference type="RefSeq" id="WP_011049730.1">
    <property type="nucleotide sequence ID" value="NC_003912.7"/>
</dbReference>
<dbReference type="SMR" id="Q5HVP5"/>
<dbReference type="KEGG" id="cjr:CJE0625"/>
<dbReference type="HOGENOM" id="CLU_006684_3_0_7"/>
<dbReference type="GO" id="GO:0005737">
    <property type="term" value="C:cytoplasm"/>
    <property type="evidence" value="ECO:0007669"/>
    <property type="project" value="UniProtKB-SubCell"/>
</dbReference>
<dbReference type="GO" id="GO:0005524">
    <property type="term" value="F:ATP binding"/>
    <property type="evidence" value="ECO:0007669"/>
    <property type="project" value="UniProtKB-UniRule"/>
</dbReference>
<dbReference type="GO" id="GO:0016887">
    <property type="term" value="F:ATP hydrolysis activity"/>
    <property type="evidence" value="ECO:0007669"/>
    <property type="project" value="InterPro"/>
</dbReference>
<dbReference type="GO" id="GO:0140662">
    <property type="term" value="F:ATP-dependent protein folding chaperone"/>
    <property type="evidence" value="ECO:0007669"/>
    <property type="project" value="InterPro"/>
</dbReference>
<dbReference type="GO" id="GO:0051082">
    <property type="term" value="F:unfolded protein binding"/>
    <property type="evidence" value="ECO:0007669"/>
    <property type="project" value="UniProtKB-UniRule"/>
</dbReference>
<dbReference type="CDD" id="cd16927">
    <property type="entry name" value="HATPase_Hsp90-like"/>
    <property type="match status" value="1"/>
</dbReference>
<dbReference type="FunFam" id="3.30.565.10:FF:000009">
    <property type="entry name" value="Molecular chaperone HtpG"/>
    <property type="match status" value="1"/>
</dbReference>
<dbReference type="Gene3D" id="3.30.230.80">
    <property type="match status" value="1"/>
</dbReference>
<dbReference type="Gene3D" id="3.40.50.11260">
    <property type="match status" value="1"/>
</dbReference>
<dbReference type="Gene3D" id="1.20.120.790">
    <property type="entry name" value="Heat shock protein 90, C-terminal domain"/>
    <property type="match status" value="1"/>
</dbReference>
<dbReference type="Gene3D" id="3.30.565.10">
    <property type="entry name" value="Histidine kinase-like ATPase, C-terminal domain"/>
    <property type="match status" value="1"/>
</dbReference>
<dbReference type="HAMAP" id="MF_00505">
    <property type="entry name" value="HSP90"/>
    <property type="match status" value="1"/>
</dbReference>
<dbReference type="InterPro" id="IPR036890">
    <property type="entry name" value="HATPase_C_sf"/>
</dbReference>
<dbReference type="InterPro" id="IPR019805">
    <property type="entry name" value="Heat_shock_protein_90_CS"/>
</dbReference>
<dbReference type="InterPro" id="IPR037196">
    <property type="entry name" value="HSP90_C"/>
</dbReference>
<dbReference type="InterPro" id="IPR001404">
    <property type="entry name" value="Hsp90_fam"/>
</dbReference>
<dbReference type="InterPro" id="IPR020575">
    <property type="entry name" value="Hsp90_N"/>
</dbReference>
<dbReference type="InterPro" id="IPR020568">
    <property type="entry name" value="Ribosomal_Su5_D2-typ_SF"/>
</dbReference>
<dbReference type="NCBIfam" id="NF003555">
    <property type="entry name" value="PRK05218.1"/>
    <property type="match status" value="1"/>
</dbReference>
<dbReference type="PANTHER" id="PTHR11528">
    <property type="entry name" value="HEAT SHOCK PROTEIN 90 FAMILY MEMBER"/>
    <property type="match status" value="1"/>
</dbReference>
<dbReference type="Pfam" id="PF13589">
    <property type="entry name" value="HATPase_c_3"/>
    <property type="match status" value="1"/>
</dbReference>
<dbReference type="Pfam" id="PF00183">
    <property type="entry name" value="HSP90"/>
    <property type="match status" value="1"/>
</dbReference>
<dbReference type="PIRSF" id="PIRSF002583">
    <property type="entry name" value="Hsp90"/>
    <property type="match status" value="1"/>
</dbReference>
<dbReference type="PRINTS" id="PR00775">
    <property type="entry name" value="HEATSHOCK90"/>
</dbReference>
<dbReference type="SMART" id="SM00387">
    <property type="entry name" value="HATPase_c"/>
    <property type="match status" value="1"/>
</dbReference>
<dbReference type="SUPFAM" id="SSF55874">
    <property type="entry name" value="ATPase domain of HSP90 chaperone/DNA topoisomerase II/histidine kinase"/>
    <property type="match status" value="1"/>
</dbReference>
<dbReference type="SUPFAM" id="SSF110942">
    <property type="entry name" value="HSP90 C-terminal domain"/>
    <property type="match status" value="1"/>
</dbReference>
<dbReference type="SUPFAM" id="SSF54211">
    <property type="entry name" value="Ribosomal protein S5 domain 2-like"/>
    <property type="match status" value="1"/>
</dbReference>
<dbReference type="PROSITE" id="PS00298">
    <property type="entry name" value="HSP90"/>
    <property type="match status" value="1"/>
</dbReference>
<feature type="chain" id="PRO_0000224201" description="Chaperone protein HtpG">
    <location>
        <begin position="1"/>
        <end position="608"/>
    </location>
</feature>
<feature type="region of interest" description="A; substrate-binding" evidence="1">
    <location>
        <begin position="1"/>
        <end position="332"/>
    </location>
</feature>
<feature type="region of interest" description="B" evidence="1">
    <location>
        <begin position="333"/>
        <end position="536"/>
    </location>
</feature>
<feature type="region of interest" description="C" evidence="1">
    <location>
        <begin position="537"/>
        <end position="608"/>
    </location>
</feature>
<proteinExistence type="inferred from homology"/>